<keyword id="KW-0131">Cell cycle</keyword>
<keyword id="KW-0132">Cell division</keyword>
<keyword id="KW-1185">Reference proteome</keyword>
<evidence type="ECO:0000255" key="1">
    <source>
        <dbReference type="HAMAP-Rule" id="MF_00262"/>
    </source>
</evidence>
<accession>A6Q377</accession>
<comment type="function">
    <text evidence="1">Prevents the cell division inhibition by proteins MinC and MinD at internal division sites while permitting inhibition at polar sites. This ensures cell division at the proper site by restricting the formation of a division septum at the midpoint of the long axis of the cell.</text>
</comment>
<comment type="similarity">
    <text evidence="1">Belongs to the MinE family.</text>
</comment>
<feature type="chain" id="PRO_1000047788" description="Cell division topological specificity factor">
    <location>
        <begin position="1"/>
        <end position="79"/>
    </location>
</feature>
<organism>
    <name type="scientific">Nitratiruptor sp. (strain SB155-2)</name>
    <dbReference type="NCBI Taxonomy" id="387092"/>
    <lineage>
        <taxon>Bacteria</taxon>
        <taxon>Pseudomonadati</taxon>
        <taxon>Campylobacterota</taxon>
        <taxon>Epsilonproteobacteria</taxon>
        <taxon>Nautiliales</taxon>
        <taxon>Nitratiruptoraceae</taxon>
        <taxon>Nitratiruptor</taxon>
    </lineage>
</organism>
<protein>
    <recommendedName>
        <fullName evidence="1">Cell division topological specificity factor</fullName>
    </recommendedName>
</protein>
<dbReference type="EMBL" id="AP009178">
    <property type="protein sequence ID" value="BAF69936.1"/>
    <property type="molecule type" value="Genomic_DNA"/>
</dbReference>
<dbReference type="RefSeq" id="WP_012082199.1">
    <property type="nucleotide sequence ID" value="NC_009662.1"/>
</dbReference>
<dbReference type="SMR" id="A6Q377"/>
<dbReference type="FunCoup" id="A6Q377">
    <property type="interactions" value="82"/>
</dbReference>
<dbReference type="STRING" id="387092.NIS_0824"/>
<dbReference type="KEGG" id="nis:NIS_0824"/>
<dbReference type="eggNOG" id="COG0851">
    <property type="taxonomic scope" value="Bacteria"/>
</dbReference>
<dbReference type="HOGENOM" id="CLU_137929_2_1_7"/>
<dbReference type="InParanoid" id="A6Q377"/>
<dbReference type="OrthoDB" id="9802655at2"/>
<dbReference type="Proteomes" id="UP000001118">
    <property type="component" value="Chromosome"/>
</dbReference>
<dbReference type="GO" id="GO:0051301">
    <property type="term" value="P:cell division"/>
    <property type="evidence" value="ECO:0007669"/>
    <property type="project" value="UniProtKB-KW"/>
</dbReference>
<dbReference type="GO" id="GO:0032955">
    <property type="term" value="P:regulation of division septum assembly"/>
    <property type="evidence" value="ECO:0007669"/>
    <property type="project" value="InterPro"/>
</dbReference>
<dbReference type="Gene3D" id="3.30.1070.10">
    <property type="entry name" value="Cell division topological specificity factor MinE"/>
    <property type="match status" value="1"/>
</dbReference>
<dbReference type="HAMAP" id="MF_00262">
    <property type="entry name" value="MinE"/>
    <property type="match status" value="1"/>
</dbReference>
<dbReference type="InterPro" id="IPR005527">
    <property type="entry name" value="MinE"/>
</dbReference>
<dbReference type="InterPro" id="IPR036707">
    <property type="entry name" value="MinE_sf"/>
</dbReference>
<dbReference type="NCBIfam" id="TIGR01215">
    <property type="entry name" value="minE"/>
    <property type="match status" value="1"/>
</dbReference>
<dbReference type="NCBIfam" id="NF001422">
    <property type="entry name" value="PRK00296.1"/>
    <property type="match status" value="1"/>
</dbReference>
<dbReference type="Pfam" id="PF03776">
    <property type="entry name" value="MinE"/>
    <property type="match status" value="1"/>
</dbReference>
<dbReference type="SUPFAM" id="SSF55229">
    <property type="entry name" value="Cell division protein MinE topological specificity domain"/>
    <property type="match status" value="1"/>
</dbReference>
<proteinExistence type="inferred from homology"/>
<reference key="1">
    <citation type="journal article" date="2007" name="Proc. Natl. Acad. Sci. U.S.A.">
        <title>Deep-sea vent epsilon-proteobacterial genomes provide insights into emergence of pathogens.</title>
        <authorList>
            <person name="Nakagawa S."/>
            <person name="Takaki Y."/>
            <person name="Shimamura S."/>
            <person name="Reysenbach A.-L."/>
            <person name="Takai K."/>
            <person name="Horikoshi K."/>
        </authorList>
    </citation>
    <scope>NUCLEOTIDE SEQUENCE [LARGE SCALE GENOMIC DNA]</scope>
    <source>
        <strain>SB155-2</strain>
    </source>
</reference>
<name>MINE_NITSB</name>
<sequence>MSLFDFFKKKKSAQKAKDRLSVAIALDRDSNIYPHLDQMKQEIMEVVKKYSQIKDVNITKDKVGDQDILDIEIVLEEGR</sequence>
<gene>
    <name evidence="1" type="primary">minE</name>
    <name type="ordered locus">NIS_0824</name>
</gene>